<proteinExistence type="predicted"/>
<dbReference type="EMBL" id="AC009317">
    <property type="protein sequence ID" value="AAF79759.1"/>
    <property type="status" value="ALT_SEQ"/>
    <property type="molecule type" value="Genomic_DNA"/>
</dbReference>
<dbReference type="EMBL" id="CP002684">
    <property type="protein sequence ID" value="AEE33603.1"/>
    <property type="status" value="ALT_SEQ"/>
    <property type="molecule type" value="Genomic_DNA"/>
</dbReference>
<dbReference type="PIR" id="E96620">
    <property type="entry name" value="E96620"/>
</dbReference>
<dbReference type="SMR" id="Q9LQ46"/>
<dbReference type="FunCoup" id="Q9LQ46">
    <property type="interactions" value="1"/>
</dbReference>
<dbReference type="STRING" id="3702.Q9LQ46"/>
<dbReference type="GeneID" id="842259"/>
<dbReference type="KEGG" id="ath:AT1G59680"/>
<dbReference type="Araport" id="AT1G59680"/>
<dbReference type="TAIR" id="AT1G59680">
    <property type="gene designation" value="EDA1"/>
</dbReference>
<dbReference type="InParanoid" id="Q9LQ46"/>
<dbReference type="PRO" id="PR:Q9LQ46"/>
<dbReference type="Proteomes" id="UP000006548">
    <property type="component" value="Chromosome 1"/>
</dbReference>
<dbReference type="ExpressionAtlas" id="Q9LQ46">
    <property type="expression patterns" value="baseline and differential"/>
</dbReference>
<dbReference type="CDD" id="cd22157">
    <property type="entry name" value="F-box_AtFBW1-like"/>
    <property type="match status" value="1"/>
</dbReference>
<dbReference type="Gene3D" id="1.20.1280.50">
    <property type="match status" value="1"/>
</dbReference>
<dbReference type="InterPro" id="IPR006527">
    <property type="entry name" value="F-box-assoc_dom_typ1"/>
</dbReference>
<dbReference type="InterPro" id="IPR017451">
    <property type="entry name" value="F-box-assoc_interact_dom"/>
</dbReference>
<dbReference type="InterPro" id="IPR036047">
    <property type="entry name" value="F-box-like_dom_sf"/>
</dbReference>
<dbReference type="InterPro" id="IPR001810">
    <property type="entry name" value="F-box_dom"/>
</dbReference>
<dbReference type="InterPro" id="IPR011043">
    <property type="entry name" value="Gal_Oxase/kelch_b-propeller"/>
</dbReference>
<dbReference type="InterPro" id="IPR050796">
    <property type="entry name" value="SCF_F-box_component"/>
</dbReference>
<dbReference type="NCBIfam" id="TIGR01640">
    <property type="entry name" value="F_box_assoc_1"/>
    <property type="match status" value="1"/>
</dbReference>
<dbReference type="PANTHER" id="PTHR31672">
    <property type="entry name" value="BNACNNG10540D PROTEIN"/>
    <property type="match status" value="1"/>
</dbReference>
<dbReference type="PANTHER" id="PTHR31672:SF13">
    <property type="entry name" value="F-BOX PROTEIN CPR30-LIKE"/>
    <property type="match status" value="1"/>
</dbReference>
<dbReference type="Pfam" id="PF00646">
    <property type="entry name" value="F-box"/>
    <property type="match status" value="1"/>
</dbReference>
<dbReference type="Pfam" id="PF07734">
    <property type="entry name" value="FBA_1"/>
    <property type="match status" value="1"/>
</dbReference>
<dbReference type="SMART" id="SM00256">
    <property type="entry name" value="FBOX"/>
    <property type="match status" value="1"/>
</dbReference>
<dbReference type="SUPFAM" id="SSF81383">
    <property type="entry name" value="F-box domain"/>
    <property type="match status" value="1"/>
</dbReference>
<dbReference type="SUPFAM" id="SSF50965">
    <property type="entry name" value="Galactose oxidase, central domain"/>
    <property type="match status" value="1"/>
</dbReference>
<reference key="1">
    <citation type="journal article" date="2000" name="Nature">
        <title>Sequence and analysis of chromosome 1 of the plant Arabidopsis thaliana.</title>
        <authorList>
            <person name="Theologis A."/>
            <person name="Ecker J.R."/>
            <person name="Palm C.J."/>
            <person name="Federspiel N.A."/>
            <person name="Kaul S."/>
            <person name="White O."/>
            <person name="Alonso J."/>
            <person name="Altafi H."/>
            <person name="Araujo R."/>
            <person name="Bowman C.L."/>
            <person name="Brooks S.Y."/>
            <person name="Buehler E."/>
            <person name="Chan A."/>
            <person name="Chao Q."/>
            <person name="Chen H."/>
            <person name="Cheuk R.F."/>
            <person name="Chin C.W."/>
            <person name="Chung M.K."/>
            <person name="Conn L."/>
            <person name="Conway A.B."/>
            <person name="Conway A.R."/>
            <person name="Creasy T.H."/>
            <person name="Dewar K."/>
            <person name="Dunn P."/>
            <person name="Etgu P."/>
            <person name="Feldblyum T.V."/>
            <person name="Feng J.-D."/>
            <person name="Fong B."/>
            <person name="Fujii C.Y."/>
            <person name="Gill J.E."/>
            <person name="Goldsmith A.D."/>
            <person name="Haas B."/>
            <person name="Hansen N.F."/>
            <person name="Hughes B."/>
            <person name="Huizar L."/>
            <person name="Hunter J.L."/>
            <person name="Jenkins J."/>
            <person name="Johnson-Hopson C."/>
            <person name="Khan S."/>
            <person name="Khaykin E."/>
            <person name="Kim C.J."/>
            <person name="Koo H.L."/>
            <person name="Kremenetskaia I."/>
            <person name="Kurtz D.B."/>
            <person name="Kwan A."/>
            <person name="Lam B."/>
            <person name="Langin-Hooper S."/>
            <person name="Lee A."/>
            <person name="Lee J.M."/>
            <person name="Lenz C.A."/>
            <person name="Li J.H."/>
            <person name="Li Y.-P."/>
            <person name="Lin X."/>
            <person name="Liu S.X."/>
            <person name="Liu Z.A."/>
            <person name="Luros J.S."/>
            <person name="Maiti R."/>
            <person name="Marziali A."/>
            <person name="Militscher J."/>
            <person name="Miranda M."/>
            <person name="Nguyen M."/>
            <person name="Nierman W.C."/>
            <person name="Osborne B.I."/>
            <person name="Pai G."/>
            <person name="Peterson J."/>
            <person name="Pham P.K."/>
            <person name="Rizzo M."/>
            <person name="Rooney T."/>
            <person name="Rowley D."/>
            <person name="Sakano H."/>
            <person name="Salzberg S.L."/>
            <person name="Schwartz J.R."/>
            <person name="Shinn P."/>
            <person name="Southwick A.M."/>
            <person name="Sun H."/>
            <person name="Tallon L.J."/>
            <person name="Tambunga G."/>
            <person name="Toriumi M.J."/>
            <person name="Town C.D."/>
            <person name="Utterback T."/>
            <person name="Van Aken S."/>
            <person name="Vaysberg M."/>
            <person name="Vysotskaia V.S."/>
            <person name="Walker M."/>
            <person name="Wu D."/>
            <person name="Yu G."/>
            <person name="Fraser C.M."/>
            <person name="Venter J.C."/>
            <person name="Davis R.W."/>
        </authorList>
    </citation>
    <scope>NUCLEOTIDE SEQUENCE [LARGE SCALE GENOMIC DNA]</scope>
    <source>
        <strain>cv. Columbia</strain>
    </source>
</reference>
<reference key="2">
    <citation type="journal article" date="2017" name="Plant J.">
        <title>Araport11: a complete reannotation of the Arabidopsis thaliana reference genome.</title>
        <authorList>
            <person name="Cheng C.Y."/>
            <person name="Krishnakumar V."/>
            <person name="Chan A.P."/>
            <person name="Thibaud-Nissen F."/>
            <person name="Schobel S."/>
            <person name="Town C.D."/>
        </authorList>
    </citation>
    <scope>GENOME REANNOTATION</scope>
    <source>
        <strain>cv. Columbia</strain>
    </source>
</reference>
<protein>
    <recommendedName>
        <fullName>F-box protein At1g59680</fullName>
    </recommendedName>
</protein>
<feature type="chain" id="PRO_0000283341" description="F-box protein At1g59680">
    <location>
        <begin position="1"/>
        <end position="364"/>
    </location>
</feature>
<feature type="domain" description="F-box">
    <location>
        <begin position="2"/>
        <end position="49"/>
    </location>
</feature>
<accession>Q9LQ46</accession>
<accession>F4ID19</accession>
<gene>
    <name type="ordered locus">At1g59680</name>
    <name type="ORF">T30E16.27</name>
</gene>
<comment type="sequence caution" evidence="1">
    <conflict type="erroneous gene model prediction">
        <sequence resource="EMBL-CDS" id="AAF79759"/>
    </conflict>
</comment>
<comment type="sequence caution" evidence="1">
    <conflict type="erroneous termination">
        <sequence resource="EMBL-CDS" id="AAF79759"/>
    </conflict>
    <text>Truncated C-terminus.</text>
</comment>
<comment type="sequence caution" evidence="1">
    <conflict type="frameshift">
        <sequence resource="EMBL-CDS" id="AAF79759"/>
    </conflict>
</comment>
<comment type="sequence caution" evidence="1">
    <conflict type="erroneous gene model prediction">
        <sequence resource="EMBL-CDS" id="AEE33603"/>
    </conflict>
</comment>
<comment type="sequence caution" evidence="1">
    <conflict type="erroneous termination">
        <sequence resource="EMBL-CDS" id="AEE33603"/>
    </conflict>
    <text>Truncated C-terminus.</text>
</comment>
<comment type="sequence caution" evidence="1">
    <conflict type="frameshift">
        <sequence resource="EMBL-CDS" id="AEE33603"/>
    </conflict>
</comment>
<evidence type="ECO:0000305" key="1"/>
<sequence length="364" mass="41932">MTTMSDLSVDLVGEILSRVPLTSLSAVRCTCKSWNTLSKHQIFGKAELAATKQFLGFTVMDYKVCSLRFDLQGIRNDGDDFVDHGEVYDVFHSDGLLLCVTKDHWRLVVWNPYLGQIRWIRARKQFGYSNMFSLGYNNSNRNHKIIEVSYVYDKTACPQYSEIYDFNSSSWRLVEINPVWFLHSDRVSLKGNTYFFAQDLLKDAKIENYLLCFDFTAERFGPHLPLPVHSYDDVTLSCVRQEQLALLYGNNETDDSLEIWITNQIDPNAVSWSIFLKVDIKPLIGFPKDFDPGSFFIDEEKKVVVVYDLDGHLYSTKKNCAYQRLYIIGEDGYFTSVKIKCSDSPEFSAYAPSLVTYKPTNYAK</sequence>
<organism>
    <name type="scientific">Arabidopsis thaliana</name>
    <name type="common">Mouse-ear cress</name>
    <dbReference type="NCBI Taxonomy" id="3702"/>
    <lineage>
        <taxon>Eukaryota</taxon>
        <taxon>Viridiplantae</taxon>
        <taxon>Streptophyta</taxon>
        <taxon>Embryophyta</taxon>
        <taxon>Tracheophyta</taxon>
        <taxon>Spermatophyta</taxon>
        <taxon>Magnoliopsida</taxon>
        <taxon>eudicotyledons</taxon>
        <taxon>Gunneridae</taxon>
        <taxon>Pentapetalae</taxon>
        <taxon>rosids</taxon>
        <taxon>malvids</taxon>
        <taxon>Brassicales</taxon>
        <taxon>Brassicaceae</taxon>
        <taxon>Camelineae</taxon>
        <taxon>Arabidopsis</taxon>
    </lineage>
</organism>
<keyword id="KW-1185">Reference proteome</keyword>
<name>FB67_ARATH</name>